<keyword id="KW-0067">ATP-binding</keyword>
<keyword id="KW-0963">Cytoplasm</keyword>
<keyword id="KW-0227">DNA damage</keyword>
<keyword id="KW-0233">DNA recombination</keyword>
<keyword id="KW-0234">DNA repair</keyword>
<keyword id="KW-0238">DNA-binding</keyword>
<keyword id="KW-0547">Nucleotide-binding</keyword>
<keyword id="KW-0742">SOS response</keyword>
<proteinExistence type="inferred from homology"/>
<name>RECA_CHLT2</name>
<accession>B0B8M5</accession>
<accession>O84656</accession>
<accession>P48287</accession>
<dbReference type="EMBL" id="U16739">
    <property type="protein sequence ID" value="AAA74947.1"/>
    <property type="molecule type" value="Genomic_DNA"/>
</dbReference>
<dbReference type="EMBL" id="AM884176">
    <property type="protein sequence ID" value="CAP03462.1"/>
    <property type="molecule type" value="Genomic_DNA"/>
</dbReference>
<dbReference type="RefSeq" id="WP_009872817.1">
    <property type="nucleotide sequence ID" value="NC_010287.1"/>
</dbReference>
<dbReference type="RefSeq" id="YP_001654109.1">
    <property type="nucleotide sequence ID" value="NC_010287.1"/>
</dbReference>
<dbReference type="SMR" id="B0B8M5"/>
<dbReference type="KEGG" id="ctb:CTL0018"/>
<dbReference type="PATRIC" id="fig|471472.4.peg.19"/>
<dbReference type="HOGENOM" id="CLU_040469_3_2_0"/>
<dbReference type="Proteomes" id="UP001154402">
    <property type="component" value="Chromosome"/>
</dbReference>
<dbReference type="GO" id="GO:0005829">
    <property type="term" value="C:cytosol"/>
    <property type="evidence" value="ECO:0007669"/>
    <property type="project" value="TreeGrafter"/>
</dbReference>
<dbReference type="GO" id="GO:0005524">
    <property type="term" value="F:ATP binding"/>
    <property type="evidence" value="ECO:0007669"/>
    <property type="project" value="UniProtKB-UniRule"/>
</dbReference>
<dbReference type="GO" id="GO:0016887">
    <property type="term" value="F:ATP hydrolysis activity"/>
    <property type="evidence" value="ECO:0007669"/>
    <property type="project" value="InterPro"/>
</dbReference>
<dbReference type="GO" id="GO:0140664">
    <property type="term" value="F:ATP-dependent DNA damage sensor activity"/>
    <property type="evidence" value="ECO:0007669"/>
    <property type="project" value="InterPro"/>
</dbReference>
<dbReference type="GO" id="GO:0003684">
    <property type="term" value="F:damaged DNA binding"/>
    <property type="evidence" value="ECO:0007669"/>
    <property type="project" value="UniProtKB-UniRule"/>
</dbReference>
<dbReference type="GO" id="GO:0003697">
    <property type="term" value="F:single-stranded DNA binding"/>
    <property type="evidence" value="ECO:0007669"/>
    <property type="project" value="UniProtKB-UniRule"/>
</dbReference>
<dbReference type="GO" id="GO:0006310">
    <property type="term" value="P:DNA recombination"/>
    <property type="evidence" value="ECO:0007669"/>
    <property type="project" value="UniProtKB-UniRule"/>
</dbReference>
<dbReference type="GO" id="GO:0006281">
    <property type="term" value="P:DNA repair"/>
    <property type="evidence" value="ECO:0007669"/>
    <property type="project" value="UniProtKB-UniRule"/>
</dbReference>
<dbReference type="GO" id="GO:0009432">
    <property type="term" value="P:SOS response"/>
    <property type="evidence" value="ECO:0007669"/>
    <property type="project" value="UniProtKB-UniRule"/>
</dbReference>
<dbReference type="CDD" id="cd00983">
    <property type="entry name" value="RecA"/>
    <property type="match status" value="1"/>
</dbReference>
<dbReference type="FunFam" id="3.40.50.300:FF:000087">
    <property type="entry name" value="Recombinase RecA"/>
    <property type="match status" value="1"/>
</dbReference>
<dbReference type="Gene3D" id="3.40.50.300">
    <property type="entry name" value="P-loop containing nucleotide triphosphate hydrolases"/>
    <property type="match status" value="1"/>
</dbReference>
<dbReference type="HAMAP" id="MF_00268">
    <property type="entry name" value="RecA"/>
    <property type="match status" value="1"/>
</dbReference>
<dbReference type="InterPro" id="IPR003593">
    <property type="entry name" value="AAA+_ATPase"/>
</dbReference>
<dbReference type="InterPro" id="IPR013765">
    <property type="entry name" value="DNA_recomb/repair_RecA"/>
</dbReference>
<dbReference type="InterPro" id="IPR020584">
    <property type="entry name" value="DNA_recomb/repair_RecA_CS"/>
</dbReference>
<dbReference type="InterPro" id="IPR027417">
    <property type="entry name" value="P-loop_NTPase"/>
</dbReference>
<dbReference type="InterPro" id="IPR049261">
    <property type="entry name" value="RecA-like_C"/>
</dbReference>
<dbReference type="InterPro" id="IPR049428">
    <property type="entry name" value="RecA-like_N"/>
</dbReference>
<dbReference type="InterPro" id="IPR020588">
    <property type="entry name" value="RecA_ATP-bd"/>
</dbReference>
<dbReference type="InterPro" id="IPR023400">
    <property type="entry name" value="RecA_C_sf"/>
</dbReference>
<dbReference type="InterPro" id="IPR020587">
    <property type="entry name" value="RecA_monomer-monomer_interface"/>
</dbReference>
<dbReference type="NCBIfam" id="TIGR02012">
    <property type="entry name" value="tigrfam_recA"/>
    <property type="match status" value="1"/>
</dbReference>
<dbReference type="PANTHER" id="PTHR45900:SF1">
    <property type="entry name" value="MITOCHONDRIAL DNA REPAIR PROTEIN RECA HOMOLOG-RELATED"/>
    <property type="match status" value="1"/>
</dbReference>
<dbReference type="PANTHER" id="PTHR45900">
    <property type="entry name" value="RECA"/>
    <property type="match status" value="1"/>
</dbReference>
<dbReference type="Pfam" id="PF00154">
    <property type="entry name" value="RecA"/>
    <property type="match status" value="1"/>
</dbReference>
<dbReference type="Pfam" id="PF21096">
    <property type="entry name" value="RecA_C"/>
    <property type="match status" value="1"/>
</dbReference>
<dbReference type="PRINTS" id="PR00142">
    <property type="entry name" value="RECA"/>
</dbReference>
<dbReference type="SMART" id="SM00382">
    <property type="entry name" value="AAA"/>
    <property type="match status" value="1"/>
</dbReference>
<dbReference type="SUPFAM" id="SSF52540">
    <property type="entry name" value="P-loop containing nucleoside triphosphate hydrolases"/>
    <property type="match status" value="1"/>
</dbReference>
<dbReference type="SUPFAM" id="SSF54752">
    <property type="entry name" value="RecA protein, C-terminal domain"/>
    <property type="match status" value="1"/>
</dbReference>
<dbReference type="PROSITE" id="PS00321">
    <property type="entry name" value="RECA_1"/>
    <property type="match status" value="1"/>
</dbReference>
<dbReference type="PROSITE" id="PS50162">
    <property type="entry name" value="RECA_2"/>
    <property type="match status" value="1"/>
</dbReference>
<dbReference type="PROSITE" id="PS50163">
    <property type="entry name" value="RECA_3"/>
    <property type="match status" value="1"/>
</dbReference>
<feature type="chain" id="PRO_1000114322" description="Protein RecA">
    <location>
        <begin position="1"/>
        <end position="352"/>
    </location>
</feature>
<feature type="binding site" evidence="1">
    <location>
        <begin position="67"/>
        <end position="74"/>
    </location>
    <ligand>
        <name>ATP</name>
        <dbReference type="ChEBI" id="CHEBI:30616"/>
    </ligand>
</feature>
<reference key="1">
    <citation type="journal article" date="1995" name="FEMS Microbiol. Lett.">
        <title>The recA gene of Chlamydia trachomatis: cloning, sequence, and characterization in Escherichia coli.</title>
        <authorList>
            <person name="Hintz N.J."/>
            <person name="Ennis D.G."/>
            <person name="Liu W.F."/>
            <person name="Larsen S.H."/>
        </authorList>
    </citation>
    <scope>NUCLEOTIDE SEQUENCE [GENOMIC DNA]</scope>
    <scope>FUNCTION</scope>
</reference>
<reference key="2">
    <citation type="journal article" date="2008" name="Genome Res.">
        <title>Chlamydia trachomatis: genome sequence analysis of lymphogranuloma venereum isolates.</title>
        <authorList>
            <person name="Thomson N.R."/>
            <person name="Holden M.T.G."/>
            <person name="Carder C."/>
            <person name="Lennard N."/>
            <person name="Lockey S.J."/>
            <person name="Marsh P."/>
            <person name="Skipp P."/>
            <person name="O'Connor C.D."/>
            <person name="Goodhead I."/>
            <person name="Norbertzcak H."/>
            <person name="Harris B."/>
            <person name="Ormond D."/>
            <person name="Rance R."/>
            <person name="Quail M.A."/>
            <person name="Parkhill J."/>
            <person name="Stephens R.S."/>
            <person name="Clarke I.N."/>
        </authorList>
    </citation>
    <scope>NUCLEOTIDE SEQUENCE [LARGE SCALE GENOMIC DNA]</scope>
    <source>
        <strain>ATCC VR-902B / DSM 19102 / 434/Bu</strain>
    </source>
</reference>
<comment type="function">
    <text evidence="1 2">Can catalyze the hydrolysis of ATP in the presence of single-stranded DNA, the ATP-dependent uptake of single-stranded DNA by duplex DNA, and the ATP-dependent hybridization of homologous single-stranded DNAs. It interacts with LexA causing its activation and leading to its autocatalytic cleavage.</text>
</comment>
<comment type="subcellular location">
    <subcellularLocation>
        <location evidence="1">Cytoplasm</location>
    </subcellularLocation>
</comment>
<comment type="similarity">
    <text evidence="1">Belongs to the RecA family.</text>
</comment>
<protein>
    <recommendedName>
        <fullName evidence="1">Protein RecA</fullName>
    </recommendedName>
    <alternativeName>
        <fullName evidence="1">Recombinase A</fullName>
    </alternativeName>
</protein>
<sequence length="352" mass="37818">MSVPDRKRALEAAIAYIEKQFGAGSIMSLGKHSSAHEISTIKTGALSLDLALGIGGVPKGRIVEIFGPESSGKTTLATHIVANAQKMGGVAAYIDAEHALDPNYAALIGANINDLMISQPDCGEDALSIAELLARSGAVDVIVIDSVAALVPKSELEGEIGDVHVGLQARMMSQALRKLTATLARTNTCAIFINQIREKIGVSFGNPETTTGGRALKFYSSIRIDIRRIGSIKGGENFDIGNRIKVKVAKNKLAPPFRTAEFDILFNEGISSAGCIIDLAVEKNIIDKKGSWFNYQDRKLGQGREAVREELKRNKELFHELERRIYESVQASQAPAAACVDSESREVAEAAK</sequence>
<organism>
    <name type="scientific">Chlamydia trachomatis serovar L2 (strain ATCC VR-902B / DSM 19102 / 434/Bu)</name>
    <dbReference type="NCBI Taxonomy" id="471472"/>
    <lineage>
        <taxon>Bacteria</taxon>
        <taxon>Pseudomonadati</taxon>
        <taxon>Chlamydiota</taxon>
        <taxon>Chlamydiia</taxon>
        <taxon>Chlamydiales</taxon>
        <taxon>Chlamydiaceae</taxon>
        <taxon>Chlamydia/Chlamydophila group</taxon>
        <taxon>Chlamydia</taxon>
    </lineage>
</organism>
<gene>
    <name evidence="1" type="primary">recA</name>
    <name type="ordered locus">CTL0018</name>
</gene>
<evidence type="ECO:0000255" key="1">
    <source>
        <dbReference type="HAMAP-Rule" id="MF_00268"/>
    </source>
</evidence>
<evidence type="ECO:0000269" key="2">
    <source>
    </source>
</evidence>